<sequence>MKFVDEASILVVAGDGGNGCVSFRREKYIPKGGPDGGDGGDGGDVWMEADENLNTLIDYRFEKSFRAERGQNGASRDCTGKRGKDVTIKVPVGTRVIDQGTGETMGDMTKHGQRLLVAKGGWHGLGNTRFKSSVNRTPRQKTNGTPGDKRELLLELMLLADVGMLGMPNAGKSTFIRAVSAAKPKVADYPFTTLVPSLGVVRMDNEKSFVVADIPGLIEGAAEGAGLGIRFLKHLERCRVLLHLIDIDPIDGTDPVENARIIISELEKYSQDLAAKPRWLVFNKIDLLDKAEAEEKAKAIAEALGWEDKYYLISAASGLGVKDLCWDVMTFIIENPVVQAEEAKQPEKVEFMWDDYHRQQLEEIAEEDDEDWDDDWDEDDEEGVEFIYKR</sequence>
<organism>
    <name type="scientific">Escherichia coli (strain 55989 / EAEC)</name>
    <dbReference type="NCBI Taxonomy" id="585055"/>
    <lineage>
        <taxon>Bacteria</taxon>
        <taxon>Pseudomonadati</taxon>
        <taxon>Pseudomonadota</taxon>
        <taxon>Gammaproteobacteria</taxon>
        <taxon>Enterobacterales</taxon>
        <taxon>Enterobacteriaceae</taxon>
        <taxon>Escherichia</taxon>
    </lineage>
</organism>
<protein>
    <recommendedName>
        <fullName evidence="1">GTPase Obg</fullName>
        <ecNumber evidence="1">3.6.5.-</ecNumber>
    </recommendedName>
    <alternativeName>
        <fullName evidence="1">GTP-binding protein Obg</fullName>
    </alternativeName>
</protein>
<comment type="function">
    <text evidence="1">An essential GTPase which binds GTP, GDP and possibly (p)ppGpp with moderate affinity, with high nucleotide exchange rates and a fairly low GTP hydrolysis rate. Plays a role in control of the cell cycle, stress response, ribosome biogenesis and in those bacteria that undergo differentiation, in morphogenesis control.</text>
</comment>
<comment type="cofactor">
    <cofactor evidence="1">
        <name>Mg(2+)</name>
        <dbReference type="ChEBI" id="CHEBI:18420"/>
    </cofactor>
</comment>
<comment type="subunit">
    <text evidence="1">Monomer.</text>
</comment>
<comment type="subcellular location">
    <subcellularLocation>
        <location evidence="1">Cytoplasm</location>
    </subcellularLocation>
</comment>
<comment type="similarity">
    <text evidence="1">Belongs to the TRAFAC class OBG-HflX-like GTPase superfamily. OBG GTPase family.</text>
</comment>
<name>OBG_ECO55</name>
<gene>
    <name evidence="1" type="primary">obg</name>
    <name type="ordered locus">EC55989_3601</name>
</gene>
<feature type="chain" id="PRO_0000385910" description="GTPase Obg">
    <location>
        <begin position="1"/>
        <end position="390"/>
    </location>
</feature>
<feature type="domain" description="Obg" evidence="2">
    <location>
        <begin position="1"/>
        <end position="159"/>
    </location>
</feature>
<feature type="domain" description="OBG-type G" evidence="1">
    <location>
        <begin position="160"/>
        <end position="333"/>
    </location>
</feature>
<feature type="region of interest" description="Disordered" evidence="3">
    <location>
        <begin position="127"/>
        <end position="147"/>
    </location>
</feature>
<feature type="compositionally biased region" description="Polar residues" evidence="3">
    <location>
        <begin position="129"/>
        <end position="145"/>
    </location>
</feature>
<feature type="binding site" evidence="1">
    <location>
        <begin position="166"/>
        <end position="173"/>
    </location>
    <ligand>
        <name>GTP</name>
        <dbReference type="ChEBI" id="CHEBI:37565"/>
    </ligand>
</feature>
<feature type="binding site" evidence="1">
    <location>
        <position position="173"/>
    </location>
    <ligand>
        <name>Mg(2+)</name>
        <dbReference type="ChEBI" id="CHEBI:18420"/>
    </ligand>
</feature>
<feature type="binding site" evidence="1">
    <location>
        <begin position="191"/>
        <end position="195"/>
    </location>
    <ligand>
        <name>GTP</name>
        <dbReference type="ChEBI" id="CHEBI:37565"/>
    </ligand>
</feature>
<feature type="binding site" evidence="1">
    <location>
        <position position="193"/>
    </location>
    <ligand>
        <name>Mg(2+)</name>
        <dbReference type="ChEBI" id="CHEBI:18420"/>
    </ligand>
</feature>
<feature type="binding site" evidence="1">
    <location>
        <begin position="213"/>
        <end position="216"/>
    </location>
    <ligand>
        <name>GTP</name>
        <dbReference type="ChEBI" id="CHEBI:37565"/>
    </ligand>
</feature>
<feature type="binding site" evidence="1">
    <location>
        <begin position="283"/>
        <end position="286"/>
    </location>
    <ligand>
        <name>GTP</name>
        <dbReference type="ChEBI" id="CHEBI:37565"/>
    </ligand>
</feature>
<feature type="binding site" evidence="1">
    <location>
        <begin position="314"/>
        <end position="316"/>
    </location>
    <ligand>
        <name>GTP</name>
        <dbReference type="ChEBI" id="CHEBI:37565"/>
    </ligand>
</feature>
<reference key="1">
    <citation type="journal article" date="2009" name="PLoS Genet.">
        <title>Organised genome dynamics in the Escherichia coli species results in highly diverse adaptive paths.</title>
        <authorList>
            <person name="Touchon M."/>
            <person name="Hoede C."/>
            <person name="Tenaillon O."/>
            <person name="Barbe V."/>
            <person name="Baeriswyl S."/>
            <person name="Bidet P."/>
            <person name="Bingen E."/>
            <person name="Bonacorsi S."/>
            <person name="Bouchier C."/>
            <person name="Bouvet O."/>
            <person name="Calteau A."/>
            <person name="Chiapello H."/>
            <person name="Clermont O."/>
            <person name="Cruveiller S."/>
            <person name="Danchin A."/>
            <person name="Diard M."/>
            <person name="Dossat C."/>
            <person name="Karoui M.E."/>
            <person name="Frapy E."/>
            <person name="Garry L."/>
            <person name="Ghigo J.M."/>
            <person name="Gilles A.M."/>
            <person name="Johnson J."/>
            <person name="Le Bouguenec C."/>
            <person name="Lescat M."/>
            <person name="Mangenot S."/>
            <person name="Martinez-Jehanne V."/>
            <person name="Matic I."/>
            <person name="Nassif X."/>
            <person name="Oztas S."/>
            <person name="Petit M.A."/>
            <person name="Pichon C."/>
            <person name="Rouy Z."/>
            <person name="Ruf C.S."/>
            <person name="Schneider D."/>
            <person name="Tourret J."/>
            <person name="Vacherie B."/>
            <person name="Vallenet D."/>
            <person name="Medigue C."/>
            <person name="Rocha E.P.C."/>
            <person name="Denamur E."/>
        </authorList>
    </citation>
    <scope>NUCLEOTIDE SEQUENCE [LARGE SCALE GENOMIC DNA]</scope>
    <source>
        <strain>55989 / EAEC</strain>
    </source>
</reference>
<proteinExistence type="inferred from homology"/>
<accession>B7LHP6</accession>
<evidence type="ECO:0000255" key="1">
    <source>
        <dbReference type="HAMAP-Rule" id="MF_01454"/>
    </source>
</evidence>
<evidence type="ECO:0000255" key="2">
    <source>
        <dbReference type="PROSITE-ProRule" id="PRU01231"/>
    </source>
</evidence>
<evidence type="ECO:0000256" key="3">
    <source>
        <dbReference type="SAM" id="MobiDB-lite"/>
    </source>
</evidence>
<dbReference type="EC" id="3.6.5.-" evidence="1"/>
<dbReference type="EMBL" id="CU928145">
    <property type="protein sequence ID" value="CAU99820.1"/>
    <property type="molecule type" value="Genomic_DNA"/>
</dbReference>
<dbReference type="SMR" id="B7LHP6"/>
<dbReference type="KEGG" id="eck:EC55989_3601"/>
<dbReference type="HOGENOM" id="CLU_011747_2_0_6"/>
<dbReference type="Proteomes" id="UP000000746">
    <property type="component" value="Chromosome"/>
</dbReference>
<dbReference type="GO" id="GO:0005737">
    <property type="term" value="C:cytoplasm"/>
    <property type="evidence" value="ECO:0007669"/>
    <property type="project" value="UniProtKB-SubCell"/>
</dbReference>
<dbReference type="GO" id="GO:0005525">
    <property type="term" value="F:GTP binding"/>
    <property type="evidence" value="ECO:0007669"/>
    <property type="project" value="UniProtKB-UniRule"/>
</dbReference>
<dbReference type="GO" id="GO:0003924">
    <property type="term" value="F:GTPase activity"/>
    <property type="evidence" value="ECO:0007669"/>
    <property type="project" value="UniProtKB-UniRule"/>
</dbReference>
<dbReference type="GO" id="GO:0000287">
    <property type="term" value="F:magnesium ion binding"/>
    <property type="evidence" value="ECO:0007669"/>
    <property type="project" value="InterPro"/>
</dbReference>
<dbReference type="GO" id="GO:0042254">
    <property type="term" value="P:ribosome biogenesis"/>
    <property type="evidence" value="ECO:0007669"/>
    <property type="project" value="UniProtKB-UniRule"/>
</dbReference>
<dbReference type="CDD" id="cd01898">
    <property type="entry name" value="Obg"/>
    <property type="match status" value="1"/>
</dbReference>
<dbReference type="FunFam" id="2.70.210.12:FF:000001">
    <property type="entry name" value="GTPase Obg"/>
    <property type="match status" value="1"/>
</dbReference>
<dbReference type="FunFam" id="3.40.50.300:FF:000185">
    <property type="entry name" value="GTPase Obg"/>
    <property type="match status" value="1"/>
</dbReference>
<dbReference type="Gene3D" id="2.70.210.12">
    <property type="entry name" value="GTP1/OBG domain"/>
    <property type="match status" value="1"/>
</dbReference>
<dbReference type="Gene3D" id="3.40.50.300">
    <property type="entry name" value="P-loop containing nucleotide triphosphate hydrolases"/>
    <property type="match status" value="1"/>
</dbReference>
<dbReference type="HAMAP" id="MF_01454">
    <property type="entry name" value="GTPase_Obg"/>
    <property type="match status" value="1"/>
</dbReference>
<dbReference type="InterPro" id="IPR031167">
    <property type="entry name" value="G_OBG"/>
</dbReference>
<dbReference type="InterPro" id="IPR006073">
    <property type="entry name" value="GTP-bd"/>
</dbReference>
<dbReference type="InterPro" id="IPR014100">
    <property type="entry name" value="GTP-bd_Obg/CgtA"/>
</dbReference>
<dbReference type="InterPro" id="IPR006074">
    <property type="entry name" value="GTP1-OBG_CS"/>
</dbReference>
<dbReference type="InterPro" id="IPR006169">
    <property type="entry name" value="GTP1_OBG_dom"/>
</dbReference>
<dbReference type="InterPro" id="IPR036726">
    <property type="entry name" value="GTP1_OBG_dom_sf"/>
</dbReference>
<dbReference type="InterPro" id="IPR045086">
    <property type="entry name" value="OBG_GTPase"/>
</dbReference>
<dbReference type="InterPro" id="IPR027417">
    <property type="entry name" value="P-loop_NTPase"/>
</dbReference>
<dbReference type="NCBIfam" id="TIGR02729">
    <property type="entry name" value="Obg_CgtA"/>
    <property type="match status" value="1"/>
</dbReference>
<dbReference type="NCBIfam" id="NF008955">
    <property type="entry name" value="PRK12297.1"/>
    <property type="match status" value="1"/>
</dbReference>
<dbReference type="NCBIfam" id="NF008956">
    <property type="entry name" value="PRK12299.1"/>
    <property type="match status" value="1"/>
</dbReference>
<dbReference type="PANTHER" id="PTHR11702">
    <property type="entry name" value="DEVELOPMENTALLY REGULATED GTP-BINDING PROTEIN-RELATED"/>
    <property type="match status" value="1"/>
</dbReference>
<dbReference type="PANTHER" id="PTHR11702:SF31">
    <property type="entry name" value="MITOCHONDRIAL RIBOSOME-ASSOCIATED GTPASE 2"/>
    <property type="match status" value="1"/>
</dbReference>
<dbReference type="Pfam" id="PF01018">
    <property type="entry name" value="GTP1_OBG"/>
    <property type="match status" value="1"/>
</dbReference>
<dbReference type="Pfam" id="PF01926">
    <property type="entry name" value="MMR_HSR1"/>
    <property type="match status" value="1"/>
</dbReference>
<dbReference type="PIRSF" id="PIRSF002401">
    <property type="entry name" value="GTP_bd_Obg/CgtA"/>
    <property type="match status" value="1"/>
</dbReference>
<dbReference type="PRINTS" id="PR00326">
    <property type="entry name" value="GTP1OBG"/>
</dbReference>
<dbReference type="SUPFAM" id="SSF82051">
    <property type="entry name" value="Obg GTP-binding protein N-terminal domain"/>
    <property type="match status" value="1"/>
</dbReference>
<dbReference type="SUPFAM" id="SSF52540">
    <property type="entry name" value="P-loop containing nucleoside triphosphate hydrolases"/>
    <property type="match status" value="1"/>
</dbReference>
<dbReference type="PROSITE" id="PS51710">
    <property type="entry name" value="G_OBG"/>
    <property type="match status" value="1"/>
</dbReference>
<dbReference type="PROSITE" id="PS00905">
    <property type="entry name" value="GTP1_OBG"/>
    <property type="match status" value="1"/>
</dbReference>
<dbReference type="PROSITE" id="PS51883">
    <property type="entry name" value="OBG"/>
    <property type="match status" value="1"/>
</dbReference>
<keyword id="KW-0963">Cytoplasm</keyword>
<keyword id="KW-0342">GTP-binding</keyword>
<keyword id="KW-0378">Hydrolase</keyword>
<keyword id="KW-0460">Magnesium</keyword>
<keyword id="KW-0479">Metal-binding</keyword>
<keyword id="KW-0547">Nucleotide-binding</keyword>
<keyword id="KW-1185">Reference proteome</keyword>